<reference key="1">
    <citation type="submission" date="2006-10" db="EMBL/GenBank/DDBJ databases">
        <authorList>
            <consortium name="Sanger Xenopus tropicalis EST/cDNA project"/>
        </authorList>
    </citation>
    <scope>NUCLEOTIDE SEQUENCE [LARGE SCALE MRNA]</scope>
    <source>
        <tissue>Neurula</tissue>
    </source>
</reference>
<reference key="2">
    <citation type="submission" date="2004-06" db="EMBL/GenBank/DDBJ databases">
        <authorList>
            <consortium name="NIH - Xenopus Gene Collection (XGC) project"/>
        </authorList>
    </citation>
    <scope>NUCLEOTIDE SEQUENCE [LARGE SCALE MRNA]</scope>
    <source>
        <tissue>Embryo</tissue>
    </source>
</reference>
<name>EMX1_XENTR</name>
<gene>
    <name type="primary">emx1</name>
    <name type="ORF">TNeu052k18.1</name>
</gene>
<dbReference type="EMBL" id="CR760018">
    <property type="protein sequence ID" value="CAJ82390.1"/>
    <property type="molecule type" value="mRNA"/>
</dbReference>
<dbReference type="EMBL" id="BC074580">
    <property type="protein sequence ID" value="AAH74580.1"/>
    <property type="molecule type" value="mRNA"/>
</dbReference>
<dbReference type="RefSeq" id="NP_001005459.1">
    <property type="nucleotide sequence ID" value="NM_001005459.1"/>
</dbReference>
<dbReference type="SMR" id="Q6GLB9"/>
<dbReference type="FunCoup" id="Q6GLB9">
    <property type="interactions" value="946"/>
</dbReference>
<dbReference type="STRING" id="8364.ENSXETP00000018669"/>
<dbReference type="PaxDb" id="8364-ENSXETP00000038936"/>
<dbReference type="DNASU" id="448058"/>
<dbReference type="GeneID" id="448058"/>
<dbReference type="KEGG" id="xtr:448058"/>
<dbReference type="AGR" id="Xenbase:XB-GENE-920144"/>
<dbReference type="CTD" id="2016"/>
<dbReference type="Xenbase" id="XB-GENE-920144">
    <property type="gene designation" value="emx1"/>
</dbReference>
<dbReference type="eggNOG" id="KOG0843">
    <property type="taxonomic scope" value="Eukaryota"/>
</dbReference>
<dbReference type="HOGENOM" id="CLU_1900878_0_0_1"/>
<dbReference type="InParanoid" id="Q6GLB9"/>
<dbReference type="OMA" id="SPHPFFG"/>
<dbReference type="OrthoDB" id="6159439at2759"/>
<dbReference type="Proteomes" id="UP000008143">
    <property type="component" value="Chromosome 1"/>
</dbReference>
<dbReference type="GO" id="GO:0005634">
    <property type="term" value="C:nucleus"/>
    <property type="evidence" value="ECO:0007669"/>
    <property type="project" value="UniProtKB-SubCell"/>
</dbReference>
<dbReference type="GO" id="GO:0003677">
    <property type="term" value="F:DNA binding"/>
    <property type="evidence" value="ECO:0007669"/>
    <property type="project" value="UniProtKB-KW"/>
</dbReference>
<dbReference type="GO" id="GO:0000981">
    <property type="term" value="F:DNA-binding transcription factor activity, RNA polymerase II-specific"/>
    <property type="evidence" value="ECO:0007669"/>
    <property type="project" value="InterPro"/>
</dbReference>
<dbReference type="CDD" id="cd00086">
    <property type="entry name" value="homeodomain"/>
    <property type="match status" value="1"/>
</dbReference>
<dbReference type="FunFam" id="1.10.10.60:FF:000299">
    <property type="entry name" value="Empty spiracles homeobox 3"/>
    <property type="match status" value="1"/>
</dbReference>
<dbReference type="Gene3D" id="1.10.10.60">
    <property type="entry name" value="Homeodomain-like"/>
    <property type="match status" value="1"/>
</dbReference>
<dbReference type="InterPro" id="IPR050877">
    <property type="entry name" value="EMX-VAX-Noto_Homeobox_TFs"/>
</dbReference>
<dbReference type="InterPro" id="IPR001356">
    <property type="entry name" value="HD"/>
</dbReference>
<dbReference type="InterPro" id="IPR020479">
    <property type="entry name" value="HD_metazoa"/>
</dbReference>
<dbReference type="InterPro" id="IPR017970">
    <property type="entry name" value="Homeobox_CS"/>
</dbReference>
<dbReference type="InterPro" id="IPR009057">
    <property type="entry name" value="Homeodomain-like_sf"/>
</dbReference>
<dbReference type="InterPro" id="IPR000047">
    <property type="entry name" value="HTH_motif"/>
</dbReference>
<dbReference type="PANTHER" id="PTHR24339">
    <property type="entry name" value="HOMEOBOX PROTEIN EMX-RELATED"/>
    <property type="match status" value="1"/>
</dbReference>
<dbReference type="PANTHER" id="PTHR24339:SF26">
    <property type="entry name" value="HOMEOBOX PROTEIN EMX1"/>
    <property type="match status" value="1"/>
</dbReference>
<dbReference type="Pfam" id="PF00046">
    <property type="entry name" value="Homeodomain"/>
    <property type="match status" value="1"/>
</dbReference>
<dbReference type="PRINTS" id="PR00024">
    <property type="entry name" value="HOMEOBOX"/>
</dbReference>
<dbReference type="PRINTS" id="PR00031">
    <property type="entry name" value="HTHREPRESSR"/>
</dbReference>
<dbReference type="SMART" id="SM00389">
    <property type="entry name" value="HOX"/>
    <property type="match status" value="1"/>
</dbReference>
<dbReference type="SUPFAM" id="SSF46689">
    <property type="entry name" value="Homeodomain-like"/>
    <property type="match status" value="1"/>
</dbReference>
<dbReference type="PROSITE" id="PS00027">
    <property type="entry name" value="HOMEOBOX_1"/>
    <property type="match status" value="1"/>
</dbReference>
<dbReference type="PROSITE" id="PS50071">
    <property type="entry name" value="HOMEOBOX_2"/>
    <property type="match status" value="1"/>
</dbReference>
<protein>
    <recommendedName>
        <fullName>Homeobox protein EMX1</fullName>
    </recommendedName>
    <alternativeName>
        <fullName>Empty spiracles homolog 1</fullName>
    </alternativeName>
    <alternativeName>
        <fullName>Empty spiracles-like protein 1</fullName>
    </alternativeName>
</protein>
<proteinExistence type="evidence at transcript level"/>
<organism>
    <name type="scientific">Xenopus tropicalis</name>
    <name type="common">Western clawed frog</name>
    <name type="synonym">Silurana tropicalis</name>
    <dbReference type="NCBI Taxonomy" id="8364"/>
    <lineage>
        <taxon>Eukaryota</taxon>
        <taxon>Metazoa</taxon>
        <taxon>Chordata</taxon>
        <taxon>Craniata</taxon>
        <taxon>Vertebrata</taxon>
        <taxon>Euteleostomi</taxon>
        <taxon>Amphibia</taxon>
        <taxon>Batrachia</taxon>
        <taxon>Anura</taxon>
        <taxon>Pipoidea</taxon>
        <taxon>Pipidae</taxon>
        <taxon>Xenopodinae</taxon>
        <taxon>Xenopus</taxon>
        <taxon>Silurana</taxon>
    </lineage>
</organism>
<keyword id="KW-0217">Developmental protein</keyword>
<keyword id="KW-0238">DNA-binding</keyword>
<keyword id="KW-0371">Homeobox</keyword>
<keyword id="KW-0539">Nucleus</keyword>
<keyword id="KW-1185">Reference proteome</keyword>
<evidence type="ECO:0000250" key="1"/>
<evidence type="ECO:0000255" key="2">
    <source>
        <dbReference type="PROSITE-ProRule" id="PRU00108"/>
    </source>
</evidence>
<evidence type="ECO:0000256" key="3">
    <source>
        <dbReference type="SAM" id="MobiDB-lite"/>
    </source>
</evidence>
<evidence type="ECO:0000305" key="4"/>
<sequence>MFQPAGKRCFTIESLVAKDNPLSSEEPLRPAALPYPGAPAEAFVSGFPSPAGRSLYNNPELVFPETVSHPPLTVHPHQLGASHLQHPHSFFAPQHRDPLNFYPWVLRNRFFGHRFQGGDVSQESLLLHGPFARKPKRIRTAFSPSQLLRLERAFEKNHYVVGAERKQLASSLSLSETQVKVWFQNRRTKYKRQKLEEEGPDSDQKKKGSHHINRWRLATKQPNGEDIDVTSND</sequence>
<accession>Q6GLB9</accession>
<feature type="chain" id="PRO_0000270144" description="Homeobox protein EMX1">
    <location>
        <begin position="1"/>
        <end position="233"/>
    </location>
</feature>
<feature type="DNA-binding region" description="Homeobox" evidence="2">
    <location>
        <begin position="135"/>
        <end position="194"/>
    </location>
</feature>
<feature type="region of interest" description="Disordered" evidence="3">
    <location>
        <begin position="192"/>
        <end position="233"/>
    </location>
</feature>
<feature type="compositionally biased region" description="Basic and acidic residues" evidence="3">
    <location>
        <begin position="193"/>
        <end position="206"/>
    </location>
</feature>
<comment type="function">
    <text evidence="1">May function in combinations with OTX1/2 to specify cell fates in the developing central nervous system.</text>
</comment>
<comment type="subcellular location">
    <subcellularLocation>
        <location evidence="4">Nucleus</location>
    </subcellularLocation>
</comment>
<comment type="similarity">
    <text evidence="4">Belongs to the EMX homeobox family.</text>
</comment>